<dbReference type="EMBL" id="Z15055">
    <property type="protein sequence ID" value="CAA78765.1"/>
    <property type="molecule type" value="Genomic_DNA"/>
</dbReference>
<dbReference type="PIR" id="S35192">
    <property type="entry name" value="S25554"/>
</dbReference>
<dbReference type="SMR" id="P31863"/>
<dbReference type="GO" id="GO:0005737">
    <property type="term" value="C:cytoplasm"/>
    <property type="evidence" value="ECO:0007669"/>
    <property type="project" value="UniProtKB-KW"/>
</dbReference>
<dbReference type="GO" id="GO:0005874">
    <property type="term" value="C:microtubule"/>
    <property type="evidence" value="ECO:0007669"/>
    <property type="project" value="UniProtKB-KW"/>
</dbReference>
<dbReference type="GO" id="GO:0005525">
    <property type="term" value="F:GTP binding"/>
    <property type="evidence" value="ECO:0007669"/>
    <property type="project" value="UniProtKB-KW"/>
</dbReference>
<dbReference type="GO" id="GO:0003924">
    <property type="term" value="F:GTPase activity"/>
    <property type="evidence" value="ECO:0007669"/>
    <property type="project" value="InterPro"/>
</dbReference>
<dbReference type="GO" id="GO:0046872">
    <property type="term" value="F:metal ion binding"/>
    <property type="evidence" value="ECO:0007669"/>
    <property type="project" value="UniProtKB-KW"/>
</dbReference>
<dbReference type="GO" id="GO:0005200">
    <property type="term" value="F:structural constituent of cytoskeleton"/>
    <property type="evidence" value="ECO:0007669"/>
    <property type="project" value="InterPro"/>
</dbReference>
<dbReference type="GO" id="GO:0007017">
    <property type="term" value="P:microtubule-based process"/>
    <property type="evidence" value="ECO:0007669"/>
    <property type="project" value="InterPro"/>
</dbReference>
<dbReference type="CDD" id="cd02187">
    <property type="entry name" value="beta_tubulin"/>
    <property type="match status" value="1"/>
</dbReference>
<dbReference type="FunFam" id="1.10.287.600:FF:000003">
    <property type="entry name" value="Tubulin beta chain"/>
    <property type="match status" value="1"/>
</dbReference>
<dbReference type="FunFam" id="3.30.1330.20:FF:000002">
    <property type="entry name" value="Tubulin beta chain"/>
    <property type="match status" value="1"/>
</dbReference>
<dbReference type="FunFam" id="3.40.50.1440:FF:000009">
    <property type="entry name" value="Tubulin beta chain"/>
    <property type="match status" value="1"/>
</dbReference>
<dbReference type="Gene3D" id="1.10.287.600">
    <property type="entry name" value="Helix hairpin bin"/>
    <property type="match status" value="1"/>
</dbReference>
<dbReference type="Gene3D" id="3.30.1330.20">
    <property type="entry name" value="Tubulin/FtsZ, C-terminal domain"/>
    <property type="match status" value="1"/>
</dbReference>
<dbReference type="Gene3D" id="3.40.50.1440">
    <property type="entry name" value="Tubulin/FtsZ, GTPase domain"/>
    <property type="match status" value="1"/>
</dbReference>
<dbReference type="InterPro" id="IPR013838">
    <property type="entry name" value="Beta-tubulin_BS"/>
</dbReference>
<dbReference type="InterPro" id="IPR002453">
    <property type="entry name" value="Beta_tubulin"/>
</dbReference>
<dbReference type="InterPro" id="IPR008280">
    <property type="entry name" value="Tub_FtsZ_C"/>
</dbReference>
<dbReference type="InterPro" id="IPR000217">
    <property type="entry name" value="Tubulin"/>
</dbReference>
<dbReference type="InterPro" id="IPR037103">
    <property type="entry name" value="Tubulin/FtsZ-like_C"/>
</dbReference>
<dbReference type="InterPro" id="IPR018316">
    <property type="entry name" value="Tubulin/FtsZ_2-layer-sand-dom"/>
</dbReference>
<dbReference type="InterPro" id="IPR036525">
    <property type="entry name" value="Tubulin/FtsZ_GTPase_sf"/>
</dbReference>
<dbReference type="InterPro" id="IPR023123">
    <property type="entry name" value="Tubulin_C"/>
</dbReference>
<dbReference type="InterPro" id="IPR017975">
    <property type="entry name" value="Tubulin_CS"/>
</dbReference>
<dbReference type="InterPro" id="IPR003008">
    <property type="entry name" value="Tubulin_FtsZ_GTPase"/>
</dbReference>
<dbReference type="PANTHER" id="PTHR11588">
    <property type="entry name" value="TUBULIN"/>
    <property type="match status" value="1"/>
</dbReference>
<dbReference type="Pfam" id="PF00091">
    <property type="entry name" value="Tubulin"/>
    <property type="match status" value="1"/>
</dbReference>
<dbReference type="Pfam" id="PF03953">
    <property type="entry name" value="Tubulin_C"/>
    <property type="match status" value="1"/>
</dbReference>
<dbReference type="PRINTS" id="PR01163">
    <property type="entry name" value="BETATUBULIN"/>
</dbReference>
<dbReference type="PRINTS" id="PR01161">
    <property type="entry name" value="TUBULIN"/>
</dbReference>
<dbReference type="SMART" id="SM00864">
    <property type="entry name" value="Tubulin"/>
    <property type="match status" value="1"/>
</dbReference>
<dbReference type="SMART" id="SM00865">
    <property type="entry name" value="Tubulin_C"/>
    <property type="match status" value="1"/>
</dbReference>
<dbReference type="SUPFAM" id="SSF55307">
    <property type="entry name" value="Tubulin C-terminal domain-like"/>
    <property type="match status" value="1"/>
</dbReference>
<dbReference type="SUPFAM" id="SSF52490">
    <property type="entry name" value="Tubulin nucleotide-binding domain-like"/>
    <property type="match status" value="1"/>
</dbReference>
<dbReference type="PROSITE" id="PS00227">
    <property type="entry name" value="TUBULIN"/>
    <property type="match status" value="1"/>
</dbReference>
<dbReference type="PROSITE" id="PS00228">
    <property type="entry name" value="TUBULIN_B_AUTOREG"/>
    <property type="match status" value="1"/>
</dbReference>
<reference key="1">
    <citation type="journal article" date="1993" name="Mol. Gen. Genet.">
        <title>A nucleotide substitution in one of the beta-tubulin genes of Trichoderma viride confers resistance to the antimitotic drug methyl benzimidazole-2-yl-carbamate.</title>
        <authorList>
            <person name="Goldman G.H."/>
            <person name="Temmerman W."/>
            <person name="Herrera-Estrella A."/>
            <person name="Jacobs D."/>
            <person name="Contreras R."/>
            <person name="van Montagu M."/>
        </authorList>
    </citation>
    <scope>NUCLEOTIDE SEQUENCE [GENOMIC DNA]</scope>
    <source>
        <strain>T9 BR47</strain>
    </source>
</reference>
<name>TBB2_HYPRU</name>
<protein>
    <recommendedName>
        <fullName>Tubulin beta-2 chain</fullName>
    </recommendedName>
    <alternativeName>
        <fullName>Beta-2-tubulin</fullName>
    </alternativeName>
</protein>
<comment type="function">
    <text>Tubulin is the major constituent of microtubules, a cylinder consisting of laterally associated linear protofilaments composed of alpha- and beta-tubulin heterodimers. Microtubules grow by the addition of GTP-tubulin dimers to the microtubule end, where a stabilizing cap forms. Below the cap, tubulin dimers are in GDP-bound state, owing to GTPase activity of alpha-tubulin.</text>
</comment>
<comment type="cofactor">
    <cofactor evidence="1">
        <name>Mg(2+)</name>
        <dbReference type="ChEBI" id="CHEBI:18420"/>
    </cofactor>
</comment>
<comment type="subunit">
    <text>Dimer of alpha and beta chains. A typical microtubule is a hollow water-filled tube with an outer diameter of 25 nm and an inner diameter of 15 nM. Alpha-beta heterodimers associate head-to-tail to form protofilaments running lengthwise along the microtubule wall with the beta-tubulin subunit facing the microtubule plus end conferring a structural polarity. Microtubules usually have 13 protofilaments but different protofilament numbers can be found in some organisms and specialized cells.</text>
</comment>
<comment type="subcellular location">
    <subcellularLocation>
        <location>Cytoplasm</location>
        <location>Cytoskeleton</location>
    </subcellularLocation>
</comment>
<comment type="similarity">
    <text evidence="3">Belongs to the tubulin family.</text>
</comment>
<organism>
    <name type="scientific">Hypocrea rufa</name>
    <name type="common">Trichoderma viride</name>
    <dbReference type="NCBI Taxonomy" id="5547"/>
    <lineage>
        <taxon>Eukaryota</taxon>
        <taxon>Fungi</taxon>
        <taxon>Dikarya</taxon>
        <taxon>Ascomycota</taxon>
        <taxon>Pezizomycotina</taxon>
        <taxon>Sordariomycetes</taxon>
        <taxon>Hypocreomycetidae</taxon>
        <taxon>Hypocreales</taxon>
        <taxon>Hypocreaceae</taxon>
        <taxon>Trichoderma</taxon>
    </lineage>
</organism>
<gene>
    <name type="primary">tub2</name>
</gene>
<proteinExistence type="inferred from homology"/>
<evidence type="ECO:0000250" key="1">
    <source>
        <dbReference type="UniProtKB" id="P68363"/>
    </source>
</evidence>
<evidence type="ECO:0000250" key="2">
    <source>
        <dbReference type="UniProtKB" id="Q13509"/>
    </source>
</evidence>
<evidence type="ECO:0000305" key="3"/>
<sequence length="446" mass="49975">MREIVYIQTGQCGNQIGAAFWQTISGEHGLDSNGIYNGSSELQLERMNVYFNEASNNKYVPRAVLVDLEPGTMDAVRAGPFGQLFRPDNFIFGQSSAGNNWAKGHYTEGAELVDQVLDVVRREAEGCDCLQGFQITHSLGGGTGSGMGTLLLSKIREEFPDRMMATFSVVPSPKVSDTVVEPYNATLSVHQLVENSDETFCIDNEALYDICMRTLKLNNPAYGDLNYLVSAVMSGITTCLRFPGQLNSDLRKLAVNMVPFPRLHFFMVGFAPLTSPGAHSFRAVTVPELTQQMFDPKNMMAASDFRNGRYLTCCSIFRGKVAMKEVEDQMRNVQNKNSTYFVEWIPNNIQTALCAIPPRGLKMSSTFIGNSTSIQELFKRVGEQFSAMFRRKAFLHWYTGEGMDEMEFTEAESNMNDLVSEYQQYQEAGIDEEEEYEDEAPMEAEE</sequence>
<feature type="chain" id="PRO_0000048437" description="Tubulin beta-2 chain">
    <location>
        <begin position="1"/>
        <end position="446"/>
    </location>
</feature>
<feature type="binding site" evidence="2">
    <location>
        <position position="11"/>
    </location>
    <ligand>
        <name>GTP</name>
        <dbReference type="ChEBI" id="CHEBI:37565"/>
    </ligand>
</feature>
<feature type="binding site" evidence="1">
    <location>
        <position position="69"/>
    </location>
    <ligand>
        <name>GTP</name>
        <dbReference type="ChEBI" id="CHEBI:37565"/>
    </ligand>
</feature>
<feature type="binding site" evidence="1">
    <location>
        <position position="69"/>
    </location>
    <ligand>
        <name>Mg(2+)</name>
        <dbReference type="ChEBI" id="CHEBI:18420"/>
    </ligand>
</feature>
<feature type="binding site" evidence="2">
    <location>
        <position position="138"/>
    </location>
    <ligand>
        <name>GTP</name>
        <dbReference type="ChEBI" id="CHEBI:37565"/>
    </ligand>
</feature>
<feature type="binding site" evidence="2">
    <location>
        <position position="142"/>
    </location>
    <ligand>
        <name>GTP</name>
        <dbReference type="ChEBI" id="CHEBI:37565"/>
    </ligand>
</feature>
<feature type="binding site" evidence="2">
    <location>
        <position position="143"/>
    </location>
    <ligand>
        <name>GTP</name>
        <dbReference type="ChEBI" id="CHEBI:37565"/>
    </ligand>
</feature>
<feature type="binding site" evidence="2">
    <location>
        <position position="144"/>
    </location>
    <ligand>
        <name>GTP</name>
        <dbReference type="ChEBI" id="CHEBI:37565"/>
    </ligand>
</feature>
<feature type="binding site" evidence="2">
    <location>
        <position position="204"/>
    </location>
    <ligand>
        <name>GTP</name>
        <dbReference type="ChEBI" id="CHEBI:37565"/>
    </ligand>
</feature>
<feature type="binding site" evidence="2">
    <location>
        <position position="226"/>
    </location>
    <ligand>
        <name>GTP</name>
        <dbReference type="ChEBI" id="CHEBI:37565"/>
    </ligand>
</feature>
<accession>P31863</accession>
<keyword id="KW-0963">Cytoplasm</keyword>
<keyword id="KW-0206">Cytoskeleton</keyword>
<keyword id="KW-0342">GTP-binding</keyword>
<keyword id="KW-0460">Magnesium</keyword>
<keyword id="KW-0479">Metal-binding</keyword>
<keyword id="KW-0493">Microtubule</keyword>
<keyword id="KW-0547">Nucleotide-binding</keyword>